<keyword id="KW-0007">Acetylation</keyword>
<keyword id="KW-0963">Cytoplasm</keyword>
<keyword id="KW-0413">Isomerase</keyword>
<keyword id="KW-0597">Phosphoprotein</keyword>
<keyword id="KW-1185">Reference proteome</keyword>
<dbReference type="EC" id="5.3.1.6"/>
<dbReference type="EMBL" id="AC016972">
    <property type="protein sequence ID" value="AAG51684.1"/>
    <property type="molecule type" value="Genomic_DNA"/>
</dbReference>
<dbReference type="EMBL" id="CP002684">
    <property type="protein sequence ID" value="AEE35161.1"/>
    <property type="molecule type" value="Genomic_DNA"/>
</dbReference>
<dbReference type="EMBL" id="AF360330">
    <property type="protein sequence ID" value="AAK26040.1"/>
    <property type="molecule type" value="mRNA"/>
</dbReference>
<dbReference type="EMBL" id="AY142637">
    <property type="protein sequence ID" value="AAN13095.1"/>
    <property type="molecule type" value="mRNA"/>
</dbReference>
<dbReference type="EMBL" id="AY087060">
    <property type="protein sequence ID" value="AAM64621.1"/>
    <property type="molecule type" value="mRNA"/>
</dbReference>
<dbReference type="PIR" id="E96735">
    <property type="entry name" value="E96735"/>
</dbReference>
<dbReference type="RefSeq" id="NP_177266.1">
    <property type="nucleotide sequence ID" value="NM_105779.4"/>
</dbReference>
<dbReference type="SMR" id="Q9C998"/>
<dbReference type="FunCoup" id="Q9C998">
    <property type="interactions" value="3623"/>
</dbReference>
<dbReference type="STRING" id="3702.Q9C998"/>
<dbReference type="iPTMnet" id="Q9C998"/>
<dbReference type="PaxDb" id="3702-AT1G71100.1"/>
<dbReference type="ProteomicsDB" id="228230"/>
<dbReference type="EnsemblPlants" id="AT1G71100.1">
    <property type="protein sequence ID" value="AT1G71100.1"/>
    <property type="gene ID" value="AT1G71100"/>
</dbReference>
<dbReference type="GeneID" id="843450"/>
<dbReference type="Gramene" id="AT1G71100.1">
    <property type="protein sequence ID" value="AT1G71100.1"/>
    <property type="gene ID" value="AT1G71100"/>
</dbReference>
<dbReference type="KEGG" id="ath:AT1G71100"/>
<dbReference type="Araport" id="AT1G71100"/>
<dbReference type="TAIR" id="AT1G71100">
    <property type="gene designation" value="RSW10"/>
</dbReference>
<dbReference type="eggNOG" id="KOG3075">
    <property type="taxonomic scope" value="Eukaryota"/>
</dbReference>
<dbReference type="HOGENOM" id="CLU_056590_1_2_1"/>
<dbReference type="InParanoid" id="Q9C998"/>
<dbReference type="OMA" id="CCNFTRG"/>
<dbReference type="PhylomeDB" id="Q9C998"/>
<dbReference type="BioCyc" id="ARA:AT1G71100-MONOMER"/>
<dbReference type="UniPathway" id="UPA00115">
    <property type="reaction ID" value="UER00412"/>
</dbReference>
<dbReference type="PRO" id="PR:Q9C998"/>
<dbReference type="Proteomes" id="UP000006548">
    <property type="component" value="Chromosome 1"/>
</dbReference>
<dbReference type="ExpressionAtlas" id="Q9C998">
    <property type="expression patterns" value="baseline and differential"/>
</dbReference>
<dbReference type="GO" id="GO:0005737">
    <property type="term" value="C:cytoplasm"/>
    <property type="evidence" value="ECO:0000314"/>
    <property type="project" value="TAIR"/>
</dbReference>
<dbReference type="GO" id="GO:0004751">
    <property type="term" value="F:ribose-5-phosphate isomerase activity"/>
    <property type="evidence" value="ECO:0007669"/>
    <property type="project" value="UniProtKB-EC"/>
</dbReference>
<dbReference type="GO" id="GO:0030244">
    <property type="term" value="P:cellulose biosynthetic process"/>
    <property type="evidence" value="ECO:0000315"/>
    <property type="project" value="TAIR"/>
</dbReference>
<dbReference type="GO" id="GO:0009052">
    <property type="term" value="P:pentose-phosphate shunt, non-oxidative branch"/>
    <property type="evidence" value="ECO:0007669"/>
    <property type="project" value="InterPro"/>
</dbReference>
<dbReference type="GO" id="GO:0046109">
    <property type="term" value="P:uridine biosynthetic process"/>
    <property type="evidence" value="ECO:0000315"/>
    <property type="project" value="TAIR"/>
</dbReference>
<dbReference type="CDD" id="cd01398">
    <property type="entry name" value="RPI_A"/>
    <property type="match status" value="1"/>
</dbReference>
<dbReference type="FunFam" id="3.30.70.260:FF:000069">
    <property type="entry name" value="Ribose-5-phosphate isomerase A"/>
    <property type="match status" value="1"/>
</dbReference>
<dbReference type="FunFam" id="3.40.50.1360:FF:000001">
    <property type="entry name" value="Ribose-5-phosphate isomerase A"/>
    <property type="match status" value="1"/>
</dbReference>
<dbReference type="Gene3D" id="3.30.70.260">
    <property type="match status" value="1"/>
</dbReference>
<dbReference type="Gene3D" id="3.40.50.1360">
    <property type="match status" value="1"/>
</dbReference>
<dbReference type="HAMAP" id="MF_00170">
    <property type="entry name" value="Rib_5P_isom_A"/>
    <property type="match status" value="1"/>
</dbReference>
<dbReference type="InterPro" id="IPR037171">
    <property type="entry name" value="NagB/RpiA_transferase-like"/>
</dbReference>
<dbReference type="InterPro" id="IPR050262">
    <property type="entry name" value="Ribose-5P_isomerase"/>
</dbReference>
<dbReference type="InterPro" id="IPR020672">
    <property type="entry name" value="Ribose5P_isomerase_typA_subgr"/>
</dbReference>
<dbReference type="InterPro" id="IPR004788">
    <property type="entry name" value="Ribose5P_isomerase_type_A"/>
</dbReference>
<dbReference type="NCBIfam" id="NF001924">
    <property type="entry name" value="PRK00702.1"/>
    <property type="match status" value="1"/>
</dbReference>
<dbReference type="NCBIfam" id="TIGR00021">
    <property type="entry name" value="rpiA"/>
    <property type="match status" value="1"/>
</dbReference>
<dbReference type="PANTHER" id="PTHR43748:SF4">
    <property type="entry name" value="RIBOSE-5-PHOSPHATE ISOMERASE 1-RELATED"/>
    <property type="match status" value="1"/>
</dbReference>
<dbReference type="PANTHER" id="PTHR43748">
    <property type="entry name" value="RIBOSE-5-PHOSPHATE ISOMERASE 3, CHLOROPLASTIC-RELATED"/>
    <property type="match status" value="1"/>
</dbReference>
<dbReference type="Pfam" id="PF06026">
    <property type="entry name" value="Rib_5-P_isom_A"/>
    <property type="match status" value="1"/>
</dbReference>
<dbReference type="SUPFAM" id="SSF75445">
    <property type="entry name" value="D-ribose-5-phosphate isomerase (RpiA), lid domain"/>
    <property type="match status" value="1"/>
</dbReference>
<dbReference type="SUPFAM" id="SSF100950">
    <property type="entry name" value="NagB/RpiA/CoA transferase-like"/>
    <property type="match status" value="1"/>
</dbReference>
<comment type="function">
    <text evidence="1">Catalyzes the reversible conversion of ribose-5-phosphate to ribulose 5-phosphate.</text>
</comment>
<comment type="catalytic activity">
    <reaction>
        <text>aldehydo-D-ribose 5-phosphate = D-ribulose 5-phosphate</text>
        <dbReference type="Rhea" id="RHEA:14657"/>
        <dbReference type="ChEBI" id="CHEBI:58121"/>
        <dbReference type="ChEBI" id="CHEBI:58273"/>
        <dbReference type="EC" id="5.3.1.6"/>
    </reaction>
</comment>
<comment type="pathway">
    <text>Carbohydrate degradation; pentose phosphate pathway; D-ribose 5-phosphate from D-ribulose 5-phosphate (non-oxidative stage): step 1/1.</text>
</comment>
<comment type="subcellular location">
    <subcellularLocation>
        <location evidence="4">Cytoplasm</location>
    </subcellularLocation>
</comment>
<comment type="tissue specificity">
    <text evidence="3">Expressed in roots, cotyledons, leaves and flowers.</text>
</comment>
<comment type="disruption phenotype">
    <text evidence="3">No visible phenotype under normal growth conditions (permissive temperature of 21 degrees Celsius), but mutant plants have a temperature-sensitive phenotype (when transferred to 31 degrees Celsius) showing radially swollen roots and reduction in cellulose production.</text>
</comment>
<comment type="similarity">
    <text evidence="4">Belongs to the ribose 5-phosphate isomerase family.</text>
</comment>
<protein>
    <recommendedName>
        <fullName>Probable ribose-5-phosphate isomerase 1</fullName>
        <ecNumber>5.3.1.6</ecNumber>
    </recommendedName>
    <alternativeName>
        <fullName>Phosphoriboisomerase 1</fullName>
    </alternativeName>
    <alternativeName>
        <fullName>Protein RADIAL SWELLING 10</fullName>
    </alternativeName>
</protein>
<reference key="1">
    <citation type="journal article" date="2000" name="Nature">
        <title>Sequence and analysis of chromosome 1 of the plant Arabidopsis thaliana.</title>
        <authorList>
            <person name="Theologis A."/>
            <person name="Ecker J.R."/>
            <person name="Palm C.J."/>
            <person name="Federspiel N.A."/>
            <person name="Kaul S."/>
            <person name="White O."/>
            <person name="Alonso J."/>
            <person name="Altafi H."/>
            <person name="Araujo R."/>
            <person name="Bowman C.L."/>
            <person name="Brooks S.Y."/>
            <person name="Buehler E."/>
            <person name="Chan A."/>
            <person name="Chao Q."/>
            <person name="Chen H."/>
            <person name="Cheuk R.F."/>
            <person name="Chin C.W."/>
            <person name="Chung M.K."/>
            <person name="Conn L."/>
            <person name="Conway A.B."/>
            <person name="Conway A.R."/>
            <person name="Creasy T.H."/>
            <person name="Dewar K."/>
            <person name="Dunn P."/>
            <person name="Etgu P."/>
            <person name="Feldblyum T.V."/>
            <person name="Feng J.-D."/>
            <person name="Fong B."/>
            <person name="Fujii C.Y."/>
            <person name="Gill J.E."/>
            <person name="Goldsmith A.D."/>
            <person name="Haas B."/>
            <person name="Hansen N.F."/>
            <person name="Hughes B."/>
            <person name="Huizar L."/>
            <person name="Hunter J.L."/>
            <person name="Jenkins J."/>
            <person name="Johnson-Hopson C."/>
            <person name="Khan S."/>
            <person name="Khaykin E."/>
            <person name="Kim C.J."/>
            <person name="Koo H.L."/>
            <person name="Kremenetskaia I."/>
            <person name="Kurtz D.B."/>
            <person name="Kwan A."/>
            <person name="Lam B."/>
            <person name="Langin-Hooper S."/>
            <person name="Lee A."/>
            <person name="Lee J.M."/>
            <person name="Lenz C.A."/>
            <person name="Li J.H."/>
            <person name="Li Y.-P."/>
            <person name="Lin X."/>
            <person name="Liu S.X."/>
            <person name="Liu Z.A."/>
            <person name="Luros J.S."/>
            <person name="Maiti R."/>
            <person name="Marziali A."/>
            <person name="Militscher J."/>
            <person name="Miranda M."/>
            <person name="Nguyen M."/>
            <person name="Nierman W.C."/>
            <person name="Osborne B.I."/>
            <person name="Pai G."/>
            <person name="Peterson J."/>
            <person name="Pham P.K."/>
            <person name="Rizzo M."/>
            <person name="Rooney T."/>
            <person name="Rowley D."/>
            <person name="Sakano H."/>
            <person name="Salzberg S.L."/>
            <person name="Schwartz J.R."/>
            <person name="Shinn P."/>
            <person name="Southwick A.M."/>
            <person name="Sun H."/>
            <person name="Tallon L.J."/>
            <person name="Tambunga G."/>
            <person name="Toriumi M.J."/>
            <person name="Town C.D."/>
            <person name="Utterback T."/>
            <person name="Van Aken S."/>
            <person name="Vaysberg M."/>
            <person name="Vysotskaia V.S."/>
            <person name="Walker M."/>
            <person name="Wu D."/>
            <person name="Yu G."/>
            <person name="Fraser C.M."/>
            <person name="Venter J.C."/>
            <person name="Davis R.W."/>
        </authorList>
    </citation>
    <scope>NUCLEOTIDE SEQUENCE [LARGE SCALE GENOMIC DNA]</scope>
    <source>
        <strain>cv. Columbia</strain>
    </source>
</reference>
<reference key="2">
    <citation type="journal article" date="2017" name="Plant J.">
        <title>Araport11: a complete reannotation of the Arabidopsis thaliana reference genome.</title>
        <authorList>
            <person name="Cheng C.Y."/>
            <person name="Krishnakumar V."/>
            <person name="Chan A.P."/>
            <person name="Thibaud-Nissen F."/>
            <person name="Schobel S."/>
            <person name="Town C.D."/>
        </authorList>
    </citation>
    <scope>GENOME REANNOTATION</scope>
    <source>
        <strain>cv. Columbia</strain>
    </source>
</reference>
<reference key="3">
    <citation type="journal article" date="2003" name="Science">
        <title>Empirical analysis of transcriptional activity in the Arabidopsis genome.</title>
        <authorList>
            <person name="Yamada K."/>
            <person name="Lim J."/>
            <person name="Dale J.M."/>
            <person name="Chen H."/>
            <person name="Shinn P."/>
            <person name="Palm C.J."/>
            <person name="Southwick A.M."/>
            <person name="Wu H.C."/>
            <person name="Kim C.J."/>
            <person name="Nguyen M."/>
            <person name="Pham P.K."/>
            <person name="Cheuk R.F."/>
            <person name="Karlin-Newmann G."/>
            <person name="Liu S.X."/>
            <person name="Lam B."/>
            <person name="Sakano H."/>
            <person name="Wu T."/>
            <person name="Yu G."/>
            <person name="Miranda M."/>
            <person name="Quach H.L."/>
            <person name="Tripp M."/>
            <person name="Chang C.H."/>
            <person name="Lee J.M."/>
            <person name="Toriumi M.J."/>
            <person name="Chan M.M."/>
            <person name="Tang C.C."/>
            <person name="Onodera C.S."/>
            <person name="Deng J.M."/>
            <person name="Akiyama K."/>
            <person name="Ansari Y."/>
            <person name="Arakawa T."/>
            <person name="Banh J."/>
            <person name="Banno F."/>
            <person name="Bowser L."/>
            <person name="Brooks S.Y."/>
            <person name="Carninci P."/>
            <person name="Chao Q."/>
            <person name="Choy N."/>
            <person name="Enju A."/>
            <person name="Goldsmith A.D."/>
            <person name="Gurjal M."/>
            <person name="Hansen N.F."/>
            <person name="Hayashizaki Y."/>
            <person name="Johnson-Hopson C."/>
            <person name="Hsuan V.W."/>
            <person name="Iida K."/>
            <person name="Karnes M."/>
            <person name="Khan S."/>
            <person name="Koesema E."/>
            <person name="Ishida J."/>
            <person name="Jiang P.X."/>
            <person name="Jones T."/>
            <person name="Kawai J."/>
            <person name="Kamiya A."/>
            <person name="Meyers C."/>
            <person name="Nakajima M."/>
            <person name="Narusaka M."/>
            <person name="Seki M."/>
            <person name="Sakurai T."/>
            <person name="Satou M."/>
            <person name="Tamse R."/>
            <person name="Vaysberg M."/>
            <person name="Wallender E.K."/>
            <person name="Wong C."/>
            <person name="Yamamura Y."/>
            <person name="Yuan S."/>
            <person name="Shinozaki K."/>
            <person name="Davis R.W."/>
            <person name="Theologis A."/>
            <person name="Ecker J.R."/>
        </authorList>
    </citation>
    <scope>NUCLEOTIDE SEQUENCE [LARGE SCALE MRNA]</scope>
    <source>
        <strain>cv. Columbia</strain>
    </source>
</reference>
<reference key="4">
    <citation type="submission" date="2002-03" db="EMBL/GenBank/DDBJ databases">
        <title>Full-length cDNA from Arabidopsis thaliana.</title>
        <authorList>
            <person name="Brover V.V."/>
            <person name="Troukhan M.E."/>
            <person name="Alexandrov N.A."/>
            <person name="Lu Y.-P."/>
            <person name="Flavell R.B."/>
            <person name="Feldmann K.A."/>
        </authorList>
    </citation>
    <scope>NUCLEOTIDE SEQUENCE [LARGE SCALE MRNA]</scope>
</reference>
<reference key="5">
    <citation type="journal article" date="2006" name="Plant J.">
        <title>A mutation in an Arabidopsis ribose 5-phosphate isomerase reduces cellulose synthesis and is rescued by exogenous uridine.</title>
        <authorList>
            <person name="Howles P.A."/>
            <person name="Birch R.J."/>
            <person name="Collings D.A."/>
            <person name="Gebbie L.K."/>
            <person name="Hurley U.A."/>
            <person name="Hocart C.H."/>
            <person name="Arioli T."/>
            <person name="Williamson R.E."/>
        </authorList>
    </citation>
    <scope>TISSUE SPECIFICITY</scope>
    <scope>DISRUPTION PHENOTYPE</scope>
    <scope>MUTAGENESIS OF GLU-115</scope>
</reference>
<reference key="6">
    <citation type="journal article" date="2012" name="Mol. Cell. Proteomics">
        <title>Comparative large-scale characterisation of plant vs. mammal proteins reveals similar and idiosyncratic N-alpha acetylation features.</title>
        <authorList>
            <person name="Bienvenut W.V."/>
            <person name="Sumpton D."/>
            <person name="Martinez A."/>
            <person name="Lilla S."/>
            <person name="Espagne C."/>
            <person name="Meinnel T."/>
            <person name="Giglione C."/>
        </authorList>
    </citation>
    <scope>ACETYLATION [LARGE SCALE ANALYSIS] AT GLY-2</scope>
    <scope>CLEAVAGE OF INITIATOR METHIONINE [LARGE SCALE ANALYSIS]</scope>
    <scope>IDENTIFICATION BY MASS SPECTROMETRY [LARGE SCALE ANALYSIS]</scope>
</reference>
<feature type="initiator methionine" description="Removed" evidence="5">
    <location>
        <position position="1"/>
    </location>
</feature>
<feature type="chain" id="PRO_0000425979" description="Probable ribose-5-phosphate isomerase 1">
    <location>
        <begin position="2"/>
        <end position="267"/>
    </location>
</feature>
<feature type="modified residue" description="N-acetylglycine" evidence="5">
    <location>
        <position position="2"/>
    </location>
</feature>
<feature type="modified residue" description="Phosphoserine" evidence="2">
    <location>
        <position position="92"/>
    </location>
</feature>
<feature type="mutagenesis site" description="In rsw10; temperature-sensitive radial swelling of roots and reduction in cellulose production." evidence="3">
    <original>E</original>
    <variation>K</variation>
    <location>
        <position position="115"/>
    </location>
</feature>
<feature type="sequence conflict" description="In Ref. 4; AAM64621." evidence="4" ref="4">
    <original>R</original>
    <variation>G</variation>
    <location>
        <position position="211"/>
    </location>
</feature>
<feature type="sequence conflict" description="In Ref. 3; AAK26040." evidence="4" ref="3">
    <original>E</original>
    <variation>K</variation>
    <location>
        <position position="241"/>
    </location>
</feature>
<name>RPI1_ARATH</name>
<sequence>MGSAFDPLVTATEDLAAVNSAPPLSNLTQEELKKIAAYKAVEFVESGMVIGLGTGSTAKHAVARISELLREGKLKDIIGIPTSTTTHEQAVSLGIPLSDLDSHPVVDLSIDGADEVDPALNLVKGRGGSLLREKMIEGASKKFVVIVDESKLVKYIGGSGLAVPVEVVPFCCDFTRGKLEELFRDSGCVAKLRMKIGSNGEEAAPAVTDNRNYVVDLYLERDIGDLEVASEAILRFPGVVEHGMFLGMATTLIVAGKFGVTVKDRFG</sequence>
<accession>Q9C998</accession>
<accession>Q8LBQ2</accession>
<accession>Q9C5D1</accession>
<organism>
    <name type="scientific">Arabidopsis thaliana</name>
    <name type="common">Mouse-ear cress</name>
    <dbReference type="NCBI Taxonomy" id="3702"/>
    <lineage>
        <taxon>Eukaryota</taxon>
        <taxon>Viridiplantae</taxon>
        <taxon>Streptophyta</taxon>
        <taxon>Embryophyta</taxon>
        <taxon>Tracheophyta</taxon>
        <taxon>Spermatophyta</taxon>
        <taxon>Magnoliopsida</taxon>
        <taxon>eudicotyledons</taxon>
        <taxon>Gunneridae</taxon>
        <taxon>Pentapetalae</taxon>
        <taxon>rosids</taxon>
        <taxon>malvids</taxon>
        <taxon>Brassicales</taxon>
        <taxon>Brassicaceae</taxon>
        <taxon>Camelineae</taxon>
        <taxon>Arabidopsis</taxon>
    </lineage>
</organism>
<evidence type="ECO:0000250" key="1"/>
<evidence type="ECO:0000250" key="2">
    <source>
        <dbReference type="UniProtKB" id="Q9S726"/>
    </source>
</evidence>
<evidence type="ECO:0000269" key="3">
    <source>
    </source>
</evidence>
<evidence type="ECO:0000305" key="4"/>
<evidence type="ECO:0007744" key="5">
    <source>
    </source>
</evidence>
<gene>
    <name type="primary">RPI1</name>
    <name type="synonym">RSW10</name>
    <name type="ordered locus">At1g71100</name>
    <name type="ORF">F23N20.9</name>
</gene>
<proteinExistence type="evidence at protein level"/>